<keyword id="KW-0963">Cytoplasm</keyword>
<keyword id="KW-0489">Methyltransferase</keyword>
<keyword id="KW-0949">S-adenosyl-L-methionine</keyword>
<keyword id="KW-0808">Transferase</keyword>
<sequence length="323" mass="35922">MKWKKYTIETTTAAEDFMSSMLMELGIEGIEIEDNIPLTKEDQADMFIDFLPELPPDEGISHVSFYIEDDGSDQSDMLRKVKLGLEDLRDTVDVGSGVISSSETEDLDWINNWKKYFSSFTIGDILIKPTWEEVKPEDADKFMIEIDPGISFGTGKHETTQLCIKQLIKYIEGAKEAPTVLDVGCGSGILSIVALKLGAKEVVGTDLDADCMISTRDNMQVNHLDEKLGTFYVGNLIDDTELQKKVGTEKYDIVVANILADVIIPMAPVIPDRLKEGGYFITSGIIDFKENEVKEAIEAAGLKVIEINHQGEWVNITAQKLTK</sequence>
<evidence type="ECO:0000255" key="1">
    <source>
        <dbReference type="HAMAP-Rule" id="MF_00735"/>
    </source>
</evidence>
<accession>C4ZAZ2</accession>
<feature type="chain" id="PRO_1000212749" description="Ribosomal protein L11 methyltransferase">
    <location>
        <begin position="1"/>
        <end position="323"/>
    </location>
</feature>
<feature type="binding site" evidence="1">
    <location>
        <position position="160"/>
    </location>
    <ligand>
        <name>S-adenosyl-L-methionine</name>
        <dbReference type="ChEBI" id="CHEBI:59789"/>
    </ligand>
</feature>
<feature type="binding site" evidence="1">
    <location>
        <position position="184"/>
    </location>
    <ligand>
        <name>S-adenosyl-L-methionine</name>
        <dbReference type="ChEBI" id="CHEBI:59789"/>
    </ligand>
</feature>
<feature type="binding site" evidence="1">
    <location>
        <position position="206"/>
    </location>
    <ligand>
        <name>S-adenosyl-L-methionine</name>
        <dbReference type="ChEBI" id="CHEBI:59789"/>
    </ligand>
</feature>
<feature type="binding site" evidence="1">
    <location>
        <position position="257"/>
    </location>
    <ligand>
        <name>S-adenosyl-L-methionine</name>
        <dbReference type="ChEBI" id="CHEBI:59789"/>
    </ligand>
</feature>
<dbReference type="EC" id="2.1.1.-" evidence="1"/>
<dbReference type="EMBL" id="CP001107">
    <property type="protein sequence ID" value="ACR75647.1"/>
    <property type="molecule type" value="Genomic_DNA"/>
</dbReference>
<dbReference type="RefSeq" id="WP_012742744.1">
    <property type="nucleotide sequence ID" value="NC_012781.1"/>
</dbReference>
<dbReference type="SMR" id="C4ZAZ2"/>
<dbReference type="STRING" id="515619.EUBREC_1903"/>
<dbReference type="PaxDb" id="515619-EUBREC_1903"/>
<dbReference type="GeneID" id="86988698"/>
<dbReference type="KEGG" id="ere:EUBREC_1903"/>
<dbReference type="HOGENOM" id="CLU_049382_0_1_9"/>
<dbReference type="Proteomes" id="UP000001477">
    <property type="component" value="Chromosome"/>
</dbReference>
<dbReference type="GO" id="GO:0005737">
    <property type="term" value="C:cytoplasm"/>
    <property type="evidence" value="ECO:0007669"/>
    <property type="project" value="UniProtKB-SubCell"/>
</dbReference>
<dbReference type="GO" id="GO:0016279">
    <property type="term" value="F:protein-lysine N-methyltransferase activity"/>
    <property type="evidence" value="ECO:0007669"/>
    <property type="project" value="RHEA"/>
</dbReference>
<dbReference type="GO" id="GO:0032259">
    <property type="term" value="P:methylation"/>
    <property type="evidence" value="ECO:0007669"/>
    <property type="project" value="UniProtKB-KW"/>
</dbReference>
<dbReference type="CDD" id="cd02440">
    <property type="entry name" value="AdoMet_MTases"/>
    <property type="match status" value="1"/>
</dbReference>
<dbReference type="Gene3D" id="3.40.50.150">
    <property type="entry name" value="Vaccinia Virus protein VP39"/>
    <property type="match status" value="1"/>
</dbReference>
<dbReference type="HAMAP" id="MF_00735">
    <property type="entry name" value="Methyltr_PrmA"/>
    <property type="match status" value="1"/>
</dbReference>
<dbReference type="InterPro" id="IPR050078">
    <property type="entry name" value="Ribosomal_L11_MeTrfase_PrmA"/>
</dbReference>
<dbReference type="InterPro" id="IPR004498">
    <property type="entry name" value="Ribosomal_PrmA_MeTrfase"/>
</dbReference>
<dbReference type="InterPro" id="IPR029063">
    <property type="entry name" value="SAM-dependent_MTases_sf"/>
</dbReference>
<dbReference type="NCBIfam" id="TIGR00406">
    <property type="entry name" value="prmA"/>
    <property type="match status" value="1"/>
</dbReference>
<dbReference type="PANTHER" id="PTHR43648">
    <property type="entry name" value="ELECTRON TRANSFER FLAVOPROTEIN BETA SUBUNIT LYSINE METHYLTRANSFERASE"/>
    <property type="match status" value="1"/>
</dbReference>
<dbReference type="PANTHER" id="PTHR43648:SF1">
    <property type="entry name" value="ELECTRON TRANSFER FLAVOPROTEIN BETA SUBUNIT LYSINE METHYLTRANSFERASE"/>
    <property type="match status" value="1"/>
</dbReference>
<dbReference type="Pfam" id="PF06325">
    <property type="entry name" value="PrmA"/>
    <property type="match status" value="1"/>
</dbReference>
<dbReference type="PIRSF" id="PIRSF000401">
    <property type="entry name" value="RPL11_MTase"/>
    <property type="match status" value="1"/>
</dbReference>
<dbReference type="SUPFAM" id="SSF53335">
    <property type="entry name" value="S-adenosyl-L-methionine-dependent methyltransferases"/>
    <property type="match status" value="1"/>
</dbReference>
<protein>
    <recommendedName>
        <fullName evidence="1">Ribosomal protein L11 methyltransferase</fullName>
        <shortName evidence="1">L11 Mtase</shortName>
        <ecNumber evidence="1">2.1.1.-</ecNumber>
    </recommendedName>
</protein>
<comment type="function">
    <text evidence="1">Methylates ribosomal protein L11.</text>
</comment>
<comment type="catalytic activity">
    <reaction evidence="1">
        <text>L-lysyl-[protein] + 3 S-adenosyl-L-methionine = N(6),N(6),N(6)-trimethyl-L-lysyl-[protein] + 3 S-adenosyl-L-homocysteine + 3 H(+)</text>
        <dbReference type="Rhea" id="RHEA:54192"/>
        <dbReference type="Rhea" id="RHEA-COMP:9752"/>
        <dbReference type="Rhea" id="RHEA-COMP:13826"/>
        <dbReference type="ChEBI" id="CHEBI:15378"/>
        <dbReference type="ChEBI" id="CHEBI:29969"/>
        <dbReference type="ChEBI" id="CHEBI:57856"/>
        <dbReference type="ChEBI" id="CHEBI:59789"/>
        <dbReference type="ChEBI" id="CHEBI:61961"/>
    </reaction>
</comment>
<comment type="subcellular location">
    <subcellularLocation>
        <location evidence="1">Cytoplasm</location>
    </subcellularLocation>
</comment>
<comment type="similarity">
    <text evidence="1">Belongs to the methyltransferase superfamily. PrmA family.</text>
</comment>
<reference key="1">
    <citation type="journal article" date="2009" name="Proc. Natl. Acad. Sci. U.S.A.">
        <title>Characterizing a model human gut microbiota composed of members of its two dominant bacterial phyla.</title>
        <authorList>
            <person name="Mahowald M.A."/>
            <person name="Rey F.E."/>
            <person name="Seedorf H."/>
            <person name="Turnbaugh P.J."/>
            <person name="Fulton R.S."/>
            <person name="Wollam A."/>
            <person name="Shah N."/>
            <person name="Wang C."/>
            <person name="Magrini V."/>
            <person name="Wilson R.K."/>
            <person name="Cantarel B.L."/>
            <person name="Coutinho P.M."/>
            <person name="Henrissat B."/>
            <person name="Crock L.W."/>
            <person name="Russell A."/>
            <person name="Verberkmoes N.C."/>
            <person name="Hettich R.L."/>
            <person name="Gordon J.I."/>
        </authorList>
    </citation>
    <scope>NUCLEOTIDE SEQUENCE [LARGE SCALE GENOMIC DNA]</scope>
    <source>
        <strain>ATCC 33656 / DSM 3377 / JCM 17463 / KCTC 5835 / LMG 30912 / VPI 0990</strain>
    </source>
</reference>
<gene>
    <name evidence="1" type="primary">prmA</name>
    <name type="ordered locus">EUBREC_1903</name>
</gene>
<proteinExistence type="inferred from homology"/>
<name>PRMA_AGARV</name>
<organism>
    <name type="scientific">Agathobacter rectalis (strain ATCC 33656 / DSM 3377 / JCM 17463 / KCTC 5835 / VPI 0990)</name>
    <name type="common">Eubacterium rectale</name>
    <dbReference type="NCBI Taxonomy" id="515619"/>
    <lineage>
        <taxon>Bacteria</taxon>
        <taxon>Bacillati</taxon>
        <taxon>Bacillota</taxon>
        <taxon>Clostridia</taxon>
        <taxon>Lachnospirales</taxon>
        <taxon>Lachnospiraceae</taxon>
        <taxon>Agathobacter</taxon>
    </lineage>
</organism>